<sequence>MDKFRVQGPTTLQGEVTISGAKNAALPILFAALLAEEPVEIQNVPKLKDVDTSMKLLSQLGAKVERNGSVHIDASQVNVFCAPYDLVKTMRASIWALGPLVARFGQGQVSLPGGCTIGARPVDLHITGLEQLGATIKLEEGYVKASVEGRLKGAHIVMDKVSVGATVTIMCAATLAEGTTIIENAAREPEIVDTANFLVTLGAKIAGQGTDRITIEGVERLGGGVYRVLPDRIETGTFLVAAAISRGKILCRNAQPDTLDAVLAKLRDAGADIEVGEDWISLDMHGKRPKAVNVRTAPHPAFPTDMQAQFTLLNLVAEGTGFITETVFENRFMHVPELSRMGARAEIESNTVICHGVETLSGAQVMATDLRASASLVLAGCIAEGTTIVDRIYHIDRGYERIEDKLRALGANIERVKGE</sequence>
<evidence type="ECO:0000255" key="1">
    <source>
        <dbReference type="HAMAP-Rule" id="MF_00111"/>
    </source>
</evidence>
<feature type="chain" id="PRO_1000094716" description="UDP-N-acetylglucosamine 1-carboxyvinyltransferase">
    <location>
        <begin position="1"/>
        <end position="419"/>
    </location>
</feature>
<feature type="active site" description="Proton donor" evidence="1">
    <location>
        <position position="115"/>
    </location>
</feature>
<feature type="binding site" evidence="1">
    <location>
        <begin position="22"/>
        <end position="23"/>
    </location>
    <ligand>
        <name>phosphoenolpyruvate</name>
        <dbReference type="ChEBI" id="CHEBI:58702"/>
    </ligand>
</feature>
<feature type="binding site" evidence="1">
    <location>
        <position position="91"/>
    </location>
    <ligand>
        <name>UDP-N-acetyl-alpha-D-glucosamine</name>
        <dbReference type="ChEBI" id="CHEBI:57705"/>
    </ligand>
</feature>
<feature type="binding site" evidence="1">
    <location>
        <begin position="120"/>
        <end position="124"/>
    </location>
    <ligand>
        <name>UDP-N-acetyl-alpha-D-glucosamine</name>
        <dbReference type="ChEBI" id="CHEBI:57705"/>
    </ligand>
</feature>
<feature type="binding site" evidence="1">
    <location>
        <begin position="160"/>
        <end position="163"/>
    </location>
    <ligand>
        <name>UDP-N-acetyl-alpha-D-glucosamine</name>
        <dbReference type="ChEBI" id="CHEBI:57705"/>
    </ligand>
</feature>
<feature type="binding site" evidence="1">
    <location>
        <position position="305"/>
    </location>
    <ligand>
        <name>UDP-N-acetyl-alpha-D-glucosamine</name>
        <dbReference type="ChEBI" id="CHEBI:57705"/>
    </ligand>
</feature>
<feature type="binding site" evidence="1">
    <location>
        <position position="327"/>
    </location>
    <ligand>
        <name>UDP-N-acetyl-alpha-D-glucosamine</name>
        <dbReference type="ChEBI" id="CHEBI:57705"/>
    </ligand>
</feature>
<feature type="modified residue" description="2-(S-cysteinyl)pyruvic acid O-phosphothioketal" evidence="1">
    <location>
        <position position="115"/>
    </location>
</feature>
<proteinExistence type="inferred from homology"/>
<reference key="1">
    <citation type="journal article" date="2011" name="J. Bacteriol.">
        <title>Comparative genomics of 28 Salmonella enterica isolates: evidence for CRISPR-mediated adaptive sublineage evolution.</title>
        <authorList>
            <person name="Fricke W.F."/>
            <person name="Mammel M.K."/>
            <person name="McDermott P.F."/>
            <person name="Tartera C."/>
            <person name="White D.G."/>
            <person name="Leclerc J.E."/>
            <person name="Ravel J."/>
            <person name="Cebula T.A."/>
        </authorList>
    </citation>
    <scope>NUCLEOTIDE SEQUENCE [LARGE SCALE GENOMIC DNA]</scope>
    <source>
        <strain>SL483</strain>
    </source>
</reference>
<accession>B5F6V8</accession>
<keyword id="KW-0131">Cell cycle</keyword>
<keyword id="KW-0132">Cell division</keyword>
<keyword id="KW-0133">Cell shape</keyword>
<keyword id="KW-0961">Cell wall biogenesis/degradation</keyword>
<keyword id="KW-0963">Cytoplasm</keyword>
<keyword id="KW-0573">Peptidoglycan synthesis</keyword>
<keyword id="KW-0670">Pyruvate</keyword>
<keyword id="KW-0808">Transferase</keyword>
<comment type="function">
    <text evidence="1">Cell wall formation. Adds enolpyruvyl to UDP-N-acetylglucosamine.</text>
</comment>
<comment type="catalytic activity">
    <reaction evidence="1">
        <text>phosphoenolpyruvate + UDP-N-acetyl-alpha-D-glucosamine = UDP-N-acetyl-3-O-(1-carboxyvinyl)-alpha-D-glucosamine + phosphate</text>
        <dbReference type="Rhea" id="RHEA:18681"/>
        <dbReference type="ChEBI" id="CHEBI:43474"/>
        <dbReference type="ChEBI" id="CHEBI:57705"/>
        <dbReference type="ChEBI" id="CHEBI:58702"/>
        <dbReference type="ChEBI" id="CHEBI:68483"/>
        <dbReference type="EC" id="2.5.1.7"/>
    </reaction>
</comment>
<comment type="pathway">
    <text evidence="1">Cell wall biogenesis; peptidoglycan biosynthesis.</text>
</comment>
<comment type="subcellular location">
    <subcellularLocation>
        <location evidence="1">Cytoplasm</location>
    </subcellularLocation>
</comment>
<comment type="similarity">
    <text evidence="1">Belongs to the EPSP synthase family. MurA subfamily.</text>
</comment>
<name>MURA_SALA4</name>
<gene>
    <name evidence="1" type="primary">murA</name>
    <name type="ordered locus">SeAg_B3497</name>
</gene>
<organism>
    <name type="scientific">Salmonella agona (strain SL483)</name>
    <dbReference type="NCBI Taxonomy" id="454166"/>
    <lineage>
        <taxon>Bacteria</taxon>
        <taxon>Pseudomonadati</taxon>
        <taxon>Pseudomonadota</taxon>
        <taxon>Gammaproteobacteria</taxon>
        <taxon>Enterobacterales</taxon>
        <taxon>Enterobacteriaceae</taxon>
        <taxon>Salmonella</taxon>
    </lineage>
</organism>
<protein>
    <recommendedName>
        <fullName evidence="1">UDP-N-acetylglucosamine 1-carboxyvinyltransferase</fullName>
        <ecNumber evidence="1">2.5.1.7</ecNumber>
    </recommendedName>
    <alternativeName>
        <fullName evidence="1">Enoylpyruvate transferase</fullName>
    </alternativeName>
    <alternativeName>
        <fullName evidence="1">UDP-N-acetylglucosamine enolpyruvyl transferase</fullName>
        <shortName evidence="1">EPT</shortName>
    </alternativeName>
</protein>
<dbReference type="EC" id="2.5.1.7" evidence="1"/>
<dbReference type="EMBL" id="CP001138">
    <property type="protein sequence ID" value="ACH49951.1"/>
    <property type="molecule type" value="Genomic_DNA"/>
</dbReference>
<dbReference type="RefSeq" id="WP_000357288.1">
    <property type="nucleotide sequence ID" value="NC_011149.1"/>
</dbReference>
<dbReference type="SMR" id="B5F6V8"/>
<dbReference type="KEGG" id="sea:SeAg_B3497"/>
<dbReference type="HOGENOM" id="CLU_027387_0_0_6"/>
<dbReference type="UniPathway" id="UPA00219"/>
<dbReference type="Proteomes" id="UP000008819">
    <property type="component" value="Chromosome"/>
</dbReference>
<dbReference type="GO" id="GO:0005737">
    <property type="term" value="C:cytoplasm"/>
    <property type="evidence" value="ECO:0007669"/>
    <property type="project" value="UniProtKB-SubCell"/>
</dbReference>
<dbReference type="GO" id="GO:0008760">
    <property type="term" value="F:UDP-N-acetylglucosamine 1-carboxyvinyltransferase activity"/>
    <property type="evidence" value="ECO:0007669"/>
    <property type="project" value="UniProtKB-UniRule"/>
</dbReference>
<dbReference type="GO" id="GO:0051301">
    <property type="term" value="P:cell division"/>
    <property type="evidence" value="ECO:0007669"/>
    <property type="project" value="UniProtKB-KW"/>
</dbReference>
<dbReference type="GO" id="GO:0071555">
    <property type="term" value="P:cell wall organization"/>
    <property type="evidence" value="ECO:0007669"/>
    <property type="project" value="UniProtKB-KW"/>
</dbReference>
<dbReference type="GO" id="GO:0009252">
    <property type="term" value="P:peptidoglycan biosynthetic process"/>
    <property type="evidence" value="ECO:0007669"/>
    <property type="project" value="UniProtKB-UniRule"/>
</dbReference>
<dbReference type="GO" id="GO:0008360">
    <property type="term" value="P:regulation of cell shape"/>
    <property type="evidence" value="ECO:0007669"/>
    <property type="project" value="UniProtKB-KW"/>
</dbReference>
<dbReference type="GO" id="GO:0019277">
    <property type="term" value="P:UDP-N-acetylgalactosamine biosynthetic process"/>
    <property type="evidence" value="ECO:0007669"/>
    <property type="project" value="InterPro"/>
</dbReference>
<dbReference type="CDD" id="cd01555">
    <property type="entry name" value="UdpNAET"/>
    <property type="match status" value="1"/>
</dbReference>
<dbReference type="FunFam" id="3.65.10.10:FF:000002">
    <property type="entry name" value="UDP-N-acetylglucosamine 1-carboxyvinyltransferase"/>
    <property type="match status" value="1"/>
</dbReference>
<dbReference type="Gene3D" id="3.65.10.10">
    <property type="entry name" value="Enolpyruvate transferase domain"/>
    <property type="match status" value="2"/>
</dbReference>
<dbReference type="HAMAP" id="MF_00111">
    <property type="entry name" value="MurA"/>
    <property type="match status" value="1"/>
</dbReference>
<dbReference type="InterPro" id="IPR001986">
    <property type="entry name" value="Enolpyruvate_Tfrase_dom"/>
</dbReference>
<dbReference type="InterPro" id="IPR036968">
    <property type="entry name" value="Enolpyruvate_Tfrase_sf"/>
</dbReference>
<dbReference type="InterPro" id="IPR050068">
    <property type="entry name" value="MurA_subfamily"/>
</dbReference>
<dbReference type="InterPro" id="IPR013792">
    <property type="entry name" value="RNA3'P_cycl/enolpyr_Trfase_a/b"/>
</dbReference>
<dbReference type="InterPro" id="IPR005750">
    <property type="entry name" value="UDP_GlcNAc_COvinyl_MurA"/>
</dbReference>
<dbReference type="NCBIfam" id="TIGR01072">
    <property type="entry name" value="murA"/>
    <property type="match status" value="1"/>
</dbReference>
<dbReference type="NCBIfam" id="NF006873">
    <property type="entry name" value="PRK09369.1"/>
    <property type="match status" value="1"/>
</dbReference>
<dbReference type="PANTHER" id="PTHR43783">
    <property type="entry name" value="UDP-N-ACETYLGLUCOSAMINE 1-CARBOXYVINYLTRANSFERASE"/>
    <property type="match status" value="1"/>
</dbReference>
<dbReference type="PANTHER" id="PTHR43783:SF1">
    <property type="entry name" value="UDP-N-ACETYLGLUCOSAMINE 1-CARBOXYVINYLTRANSFERASE"/>
    <property type="match status" value="1"/>
</dbReference>
<dbReference type="Pfam" id="PF00275">
    <property type="entry name" value="EPSP_synthase"/>
    <property type="match status" value="1"/>
</dbReference>
<dbReference type="SUPFAM" id="SSF55205">
    <property type="entry name" value="EPT/RTPC-like"/>
    <property type="match status" value="1"/>
</dbReference>